<organism>
    <name type="scientific">Shigella sonnei (strain Ss046)</name>
    <dbReference type="NCBI Taxonomy" id="300269"/>
    <lineage>
        <taxon>Bacteria</taxon>
        <taxon>Pseudomonadati</taxon>
        <taxon>Pseudomonadota</taxon>
        <taxon>Gammaproteobacteria</taxon>
        <taxon>Enterobacterales</taxon>
        <taxon>Enterobacteriaceae</taxon>
        <taxon>Shigella</taxon>
    </lineage>
</organism>
<protein>
    <recommendedName>
        <fullName evidence="1">tRNA pseudouridine synthase D</fullName>
        <ecNumber evidence="1">5.4.99.27</ecNumber>
    </recommendedName>
    <alternativeName>
        <fullName evidence="1">tRNA pseudouridine(13) synthase</fullName>
    </alternativeName>
    <alternativeName>
        <fullName evidence="1">tRNA pseudouridylate synthase D</fullName>
    </alternativeName>
    <alternativeName>
        <fullName evidence="1">tRNA-uridine isomerase D</fullName>
    </alternativeName>
</protein>
<feature type="chain" id="PRO_0000230153" description="tRNA pseudouridine synthase D">
    <location>
        <begin position="1"/>
        <end position="349"/>
    </location>
</feature>
<feature type="domain" description="TRUD" evidence="1">
    <location>
        <begin position="155"/>
        <end position="303"/>
    </location>
</feature>
<feature type="active site" description="Nucleophile" evidence="1">
    <location>
        <position position="80"/>
    </location>
</feature>
<feature type="binding site" evidence="1">
    <location>
        <position position="27"/>
    </location>
    <ligand>
        <name>substrate</name>
    </ligand>
</feature>
<feature type="binding site" evidence="1">
    <location>
        <position position="129"/>
    </location>
    <ligand>
        <name>substrate</name>
    </ligand>
</feature>
<feature type="binding site" evidence="1">
    <location>
        <position position="329"/>
    </location>
    <ligand>
        <name>substrate</name>
    </ligand>
</feature>
<evidence type="ECO:0000255" key="1">
    <source>
        <dbReference type="HAMAP-Rule" id="MF_01082"/>
    </source>
</evidence>
<dbReference type="EC" id="5.4.99.27" evidence="1"/>
<dbReference type="EMBL" id="CP000038">
    <property type="protein sequence ID" value="AAZ89495.1"/>
    <property type="molecule type" value="Genomic_DNA"/>
</dbReference>
<dbReference type="RefSeq" id="WP_000568942.1">
    <property type="nucleotide sequence ID" value="NC_007384.1"/>
</dbReference>
<dbReference type="SMR" id="Q3YYB7"/>
<dbReference type="GeneID" id="93779261"/>
<dbReference type="KEGG" id="ssn:SSON_2893"/>
<dbReference type="HOGENOM" id="CLU_005281_4_0_6"/>
<dbReference type="Proteomes" id="UP000002529">
    <property type="component" value="Chromosome"/>
</dbReference>
<dbReference type="GO" id="GO:0005829">
    <property type="term" value="C:cytosol"/>
    <property type="evidence" value="ECO:0007669"/>
    <property type="project" value="TreeGrafter"/>
</dbReference>
<dbReference type="GO" id="GO:0003723">
    <property type="term" value="F:RNA binding"/>
    <property type="evidence" value="ECO:0007669"/>
    <property type="project" value="InterPro"/>
</dbReference>
<dbReference type="GO" id="GO:0160150">
    <property type="term" value="F:tRNA pseudouridine(13) synthase activity"/>
    <property type="evidence" value="ECO:0007669"/>
    <property type="project" value="UniProtKB-EC"/>
</dbReference>
<dbReference type="GO" id="GO:0031119">
    <property type="term" value="P:tRNA pseudouridine synthesis"/>
    <property type="evidence" value="ECO:0007669"/>
    <property type="project" value="UniProtKB-UniRule"/>
</dbReference>
<dbReference type="CDD" id="cd02575">
    <property type="entry name" value="PseudoU_synth_EcTruD"/>
    <property type="match status" value="1"/>
</dbReference>
<dbReference type="FunFam" id="3.30.2340.10:FF:000001">
    <property type="entry name" value="tRNA pseudouridine synthase D"/>
    <property type="match status" value="1"/>
</dbReference>
<dbReference type="FunFam" id="3.30.2350.20:FF:000001">
    <property type="entry name" value="tRNA pseudouridine synthase D"/>
    <property type="match status" value="1"/>
</dbReference>
<dbReference type="Gene3D" id="3.30.2350.20">
    <property type="entry name" value="TruD, catalytic domain"/>
    <property type="match status" value="1"/>
</dbReference>
<dbReference type="Gene3D" id="3.30.2340.10">
    <property type="entry name" value="TruD, insertion domain"/>
    <property type="match status" value="1"/>
</dbReference>
<dbReference type="HAMAP" id="MF_01082">
    <property type="entry name" value="TruD"/>
    <property type="match status" value="1"/>
</dbReference>
<dbReference type="InterPro" id="IPR020103">
    <property type="entry name" value="PsdUridine_synth_cat_dom_sf"/>
</dbReference>
<dbReference type="InterPro" id="IPR001656">
    <property type="entry name" value="PsdUridine_synth_TruD"/>
</dbReference>
<dbReference type="InterPro" id="IPR020119">
    <property type="entry name" value="PsdUridine_synth_TruD_CS"/>
</dbReference>
<dbReference type="InterPro" id="IPR011760">
    <property type="entry name" value="PsdUridine_synth_TruD_insert"/>
</dbReference>
<dbReference type="InterPro" id="IPR042214">
    <property type="entry name" value="TruD_catalytic"/>
</dbReference>
<dbReference type="InterPro" id="IPR043165">
    <property type="entry name" value="TruD_insert_sf"/>
</dbReference>
<dbReference type="InterPro" id="IPR050170">
    <property type="entry name" value="TruD_pseudoU_synthase"/>
</dbReference>
<dbReference type="NCBIfam" id="NF002155">
    <property type="entry name" value="PRK00984.1-4"/>
    <property type="match status" value="1"/>
</dbReference>
<dbReference type="NCBIfam" id="TIGR00094">
    <property type="entry name" value="tRNA_TruD_broad"/>
    <property type="match status" value="1"/>
</dbReference>
<dbReference type="PANTHER" id="PTHR47811">
    <property type="entry name" value="TRNA PSEUDOURIDINE SYNTHASE D"/>
    <property type="match status" value="1"/>
</dbReference>
<dbReference type="PANTHER" id="PTHR47811:SF1">
    <property type="entry name" value="TRNA PSEUDOURIDINE SYNTHASE D"/>
    <property type="match status" value="1"/>
</dbReference>
<dbReference type="Pfam" id="PF01142">
    <property type="entry name" value="TruD"/>
    <property type="match status" value="2"/>
</dbReference>
<dbReference type="SUPFAM" id="SSF55120">
    <property type="entry name" value="Pseudouridine synthase"/>
    <property type="match status" value="1"/>
</dbReference>
<dbReference type="PROSITE" id="PS50984">
    <property type="entry name" value="TRUD"/>
    <property type="match status" value="1"/>
</dbReference>
<dbReference type="PROSITE" id="PS01268">
    <property type="entry name" value="UPF0024"/>
    <property type="match status" value="1"/>
</dbReference>
<keyword id="KW-0413">Isomerase</keyword>
<keyword id="KW-1185">Reference proteome</keyword>
<keyword id="KW-0819">tRNA processing</keyword>
<accession>Q3YYB7</accession>
<name>TRUD_SHISS</name>
<comment type="function">
    <text evidence="1">Responsible for synthesis of pseudouridine from uracil-13 in transfer RNAs.</text>
</comment>
<comment type="catalytic activity">
    <reaction evidence="1">
        <text>uridine(13) in tRNA = pseudouridine(13) in tRNA</text>
        <dbReference type="Rhea" id="RHEA:42540"/>
        <dbReference type="Rhea" id="RHEA-COMP:10105"/>
        <dbReference type="Rhea" id="RHEA-COMP:10106"/>
        <dbReference type="ChEBI" id="CHEBI:65314"/>
        <dbReference type="ChEBI" id="CHEBI:65315"/>
        <dbReference type="EC" id="5.4.99.27"/>
    </reaction>
</comment>
<comment type="similarity">
    <text evidence="1">Belongs to the pseudouridine synthase TruD family.</text>
</comment>
<proteinExistence type="inferred from homology"/>
<gene>
    <name evidence="1" type="primary">truD</name>
    <name type="ordered locus">SSON_2893</name>
</gene>
<sequence>MIEFDNLTYLHGKPQGTGLLKANPEDFVVVEDLGFEPDGEGEHILVRILKNGCNTRFVADALAKFLKIHAREVSFAGQKDKHAVTEQWLCARVPGKEMPDLSAFQLEGCQVLEYARHKRKLRLGALKGNAFTLVLREVSNRDDVEQRLIDICVKGVPNYFGAQRFGIGGSNLQGAQRWAQTNTPVRDRNKRSFWLSAARSALFNQIVAERLKKADVNQVVDGDALQLAGRGSWFVATTEELAELQRRVNDKELMITAALPGSGEWGTQREALAFEKAAVAAETELQALLVREKVEAARRAMLLYPQQLSWNWWDDVTVEIRFWLPAGSFATSVVRELINTTGDYAHIAE</sequence>
<reference key="1">
    <citation type="journal article" date="2005" name="Nucleic Acids Res.">
        <title>Genome dynamics and diversity of Shigella species, the etiologic agents of bacillary dysentery.</title>
        <authorList>
            <person name="Yang F."/>
            <person name="Yang J."/>
            <person name="Zhang X."/>
            <person name="Chen L."/>
            <person name="Jiang Y."/>
            <person name="Yan Y."/>
            <person name="Tang X."/>
            <person name="Wang J."/>
            <person name="Xiong Z."/>
            <person name="Dong J."/>
            <person name="Xue Y."/>
            <person name="Zhu Y."/>
            <person name="Xu X."/>
            <person name="Sun L."/>
            <person name="Chen S."/>
            <person name="Nie H."/>
            <person name="Peng J."/>
            <person name="Xu J."/>
            <person name="Wang Y."/>
            <person name="Yuan Z."/>
            <person name="Wen Y."/>
            <person name="Yao Z."/>
            <person name="Shen Y."/>
            <person name="Qiang B."/>
            <person name="Hou Y."/>
            <person name="Yu J."/>
            <person name="Jin Q."/>
        </authorList>
    </citation>
    <scope>NUCLEOTIDE SEQUENCE [LARGE SCALE GENOMIC DNA]</scope>
    <source>
        <strain>Ss046</strain>
    </source>
</reference>